<geneLocation type="mitochondrion"/>
<keyword id="KW-0249">Electron transport</keyword>
<keyword id="KW-0349">Heme</keyword>
<keyword id="KW-0408">Iron</keyword>
<keyword id="KW-0472">Membrane</keyword>
<keyword id="KW-0479">Metal-binding</keyword>
<keyword id="KW-0496">Mitochondrion</keyword>
<keyword id="KW-0999">Mitochondrion inner membrane</keyword>
<keyword id="KW-0679">Respiratory chain</keyword>
<keyword id="KW-0812">Transmembrane</keyword>
<keyword id="KW-1133">Transmembrane helix</keyword>
<keyword id="KW-0813">Transport</keyword>
<keyword id="KW-0830">Ubiquinone</keyword>
<sequence length="376" mass="43286">MNYNSINLVKTHLINYPCPLNINFLWNYGFLLGIIFFIQILTGVFLASRYSPEISYAYYSIQHILRELWSGWCFRYMHATGASLVFFLTYLHILRGLNYSYLYLPLSWISGLIIFALFIVTAFIGYVLPWGQMSYWGATVITNLLSGIPSLVIWLCGGYTVSDPTIKRFFVLHFILPFVALCIVFIHIFFLHLHGSTNPLGYDTALKIPFYPNLLSLDVKGFNNILILFLIQSIFGVIPLSHPDNAIVVNTYVTPLQIVPEWYFLPFYAMLKTIPSKNAGLVIVIASLQLLFLLAEQRNLTTIIQFKMVFSAREYSVPIIWFMCSFYALLWIGCPLPQDIFILYGRLFIILFFSSGLFSLVQNKKTHYDYSSQANI</sequence>
<organism>
    <name type="scientific">Plasmodium berghei</name>
    <dbReference type="NCBI Taxonomy" id="5821"/>
    <lineage>
        <taxon>Eukaryota</taxon>
        <taxon>Sar</taxon>
        <taxon>Alveolata</taxon>
        <taxon>Apicomplexa</taxon>
        <taxon>Aconoidasida</taxon>
        <taxon>Haemosporida</taxon>
        <taxon>Plasmodiidae</taxon>
        <taxon>Plasmodium</taxon>
        <taxon>Plasmodium (Vinckeia)</taxon>
    </lineage>
</organism>
<feature type="chain" id="PRO_0000061406" description="Cytochrome b">
    <location>
        <begin position="1"/>
        <end position="376"/>
    </location>
</feature>
<feature type="transmembrane region" description="Helical" evidence="3">
    <location>
        <begin position="28"/>
        <end position="48"/>
    </location>
</feature>
<feature type="transmembrane region" description="Helical" evidence="3">
    <location>
        <begin position="72"/>
        <end position="94"/>
    </location>
</feature>
<feature type="transmembrane region" description="Helical" evidence="3">
    <location>
        <begin position="107"/>
        <end position="127"/>
    </location>
</feature>
<feature type="transmembrane region" description="Helical" evidence="3">
    <location>
        <begin position="169"/>
        <end position="189"/>
    </location>
</feature>
<feature type="transmembrane region" description="Helical" evidence="3">
    <location>
        <begin position="214"/>
        <end position="234"/>
    </location>
</feature>
<feature type="transmembrane region" description="Helical" evidence="4">
    <location>
        <begin position="274"/>
        <end position="294"/>
    </location>
</feature>
<feature type="transmembrane region" description="Helical" evidence="4">
    <location>
        <begin position="317"/>
        <end position="337"/>
    </location>
</feature>
<feature type="transmembrane region" description="Helical" evidence="4">
    <location>
        <begin position="340"/>
        <end position="360"/>
    </location>
</feature>
<feature type="binding site" description="axial binding residue" evidence="3">
    <location>
        <position position="78"/>
    </location>
    <ligand>
        <name>heme b</name>
        <dbReference type="ChEBI" id="CHEBI:60344"/>
        <label>b562</label>
    </ligand>
    <ligandPart>
        <name>Fe</name>
        <dbReference type="ChEBI" id="CHEBI:18248"/>
    </ligandPart>
</feature>
<feature type="binding site" description="axial binding residue" evidence="3">
    <location>
        <position position="92"/>
    </location>
    <ligand>
        <name>heme b</name>
        <dbReference type="ChEBI" id="CHEBI:60344"/>
        <label>b566</label>
    </ligand>
    <ligandPart>
        <name>Fe</name>
        <dbReference type="ChEBI" id="CHEBI:18248"/>
    </ligandPart>
</feature>
<feature type="binding site" description="axial binding residue" evidence="3">
    <location>
        <position position="173"/>
    </location>
    <ligand>
        <name>heme b</name>
        <dbReference type="ChEBI" id="CHEBI:60344"/>
        <label>b562</label>
    </ligand>
    <ligandPart>
        <name>Fe</name>
        <dbReference type="ChEBI" id="CHEBI:18248"/>
    </ligandPart>
</feature>
<feature type="binding site" description="axial binding residue" evidence="3">
    <location>
        <position position="187"/>
    </location>
    <ligand>
        <name>heme b</name>
        <dbReference type="ChEBI" id="CHEBI:60344"/>
        <label>b566</label>
    </ligand>
    <ligandPart>
        <name>Fe</name>
        <dbReference type="ChEBI" id="CHEBI:18248"/>
    </ligandPart>
</feature>
<feature type="binding site" evidence="2">
    <location>
        <position position="192"/>
    </location>
    <ligand>
        <name>a ubiquinone</name>
        <dbReference type="ChEBI" id="CHEBI:16389"/>
    </ligand>
</feature>
<proteinExistence type="inferred from homology"/>
<evidence type="ECO:0000250" key="1"/>
<evidence type="ECO:0000250" key="2">
    <source>
        <dbReference type="UniProtKB" id="P00157"/>
    </source>
</evidence>
<evidence type="ECO:0000250" key="3">
    <source>
        <dbReference type="UniProtKB" id="P00163"/>
    </source>
</evidence>
<evidence type="ECO:0000255" key="4"/>
<evidence type="ECO:0000255" key="5">
    <source>
        <dbReference type="PROSITE-ProRule" id="PRU00967"/>
    </source>
</evidence>
<evidence type="ECO:0000255" key="6">
    <source>
        <dbReference type="PROSITE-ProRule" id="PRU00968"/>
    </source>
</evidence>
<accession>O99253</accession>
<comment type="function">
    <text evidence="3">Component of the ubiquinol-cytochrome c reductase complex (complex III or cytochrome b-c1 complex) that is part of the mitochondrial respiratory chain. The b-c1 complex mediates electron transfer from ubiquinol to cytochrome c. Contributes to the generation of a proton gradient across the mitochondrial membrane that is then used for ATP synthesis.</text>
</comment>
<comment type="cofactor">
    <cofactor evidence="3">
        <name>heme b</name>
        <dbReference type="ChEBI" id="CHEBI:60344"/>
    </cofactor>
    <text evidence="3">Binds 2 heme b groups non-covalently.</text>
</comment>
<comment type="subunit">
    <text evidence="1">The main subunits of complex b-c1 are: cytochrome b, cytochrome c1 and the Rieske protein.</text>
</comment>
<comment type="subcellular location">
    <subcellularLocation>
        <location evidence="3">Mitochondrion inner membrane</location>
        <topology evidence="3">Multi-pass membrane protein</topology>
    </subcellularLocation>
</comment>
<comment type="miscellaneous">
    <text evidence="1">Heme 1 (or BL or b562) is low-potential and absorbs at about 562 nm, and heme 2 (or BH or b566) is high-potential and absorbs at about 566 nm.</text>
</comment>
<comment type="similarity">
    <text evidence="5 6">Belongs to the cytochrome b family.</text>
</comment>
<comment type="caution">
    <text evidence="3">The protein contains an even number of transmembrane helices, fewer than predicted by bioinformatics tools.</text>
</comment>
<dbReference type="EMBL" id="AF014115">
    <property type="protein sequence ID" value="AAD01526.1"/>
    <property type="molecule type" value="Genomic_DNA"/>
</dbReference>
<dbReference type="SMR" id="O99253"/>
<dbReference type="VEuPathDB" id="PlasmoDB:PBANKA_MIT01900"/>
<dbReference type="GO" id="GO:0005743">
    <property type="term" value="C:mitochondrial inner membrane"/>
    <property type="evidence" value="ECO:0007669"/>
    <property type="project" value="UniProtKB-SubCell"/>
</dbReference>
<dbReference type="GO" id="GO:0046872">
    <property type="term" value="F:metal ion binding"/>
    <property type="evidence" value="ECO:0007669"/>
    <property type="project" value="UniProtKB-KW"/>
</dbReference>
<dbReference type="GO" id="GO:0008121">
    <property type="term" value="F:ubiquinol-cytochrome-c reductase activity"/>
    <property type="evidence" value="ECO:0007669"/>
    <property type="project" value="TreeGrafter"/>
</dbReference>
<dbReference type="GO" id="GO:0006122">
    <property type="term" value="P:mitochondrial electron transport, ubiquinol to cytochrome c"/>
    <property type="evidence" value="ECO:0007669"/>
    <property type="project" value="TreeGrafter"/>
</dbReference>
<dbReference type="CDD" id="cd00284">
    <property type="entry name" value="Cytochrome_b_N"/>
    <property type="match status" value="1"/>
</dbReference>
<dbReference type="FunFam" id="1.20.810.10:FF:000008">
    <property type="entry name" value="Cytochrome b"/>
    <property type="match status" value="1"/>
</dbReference>
<dbReference type="Gene3D" id="1.20.810.10">
    <property type="entry name" value="Cytochrome Bc1 Complex, Chain C"/>
    <property type="match status" value="1"/>
</dbReference>
<dbReference type="InterPro" id="IPR005798">
    <property type="entry name" value="Cyt_b/b6_C"/>
</dbReference>
<dbReference type="InterPro" id="IPR036150">
    <property type="entry name" value="Cyt_b/b6_C_sf"/>
</dbReference>
<dbReference type="InterPro" id="IPR005797">
    <property type="entry name" value="Cyt_b/b6_N"/>
</dbReference>
<dbReference type="InterPro" id="IPR027387">
    <property type="entry name" value="Cytb/b6-like_sf"/>
</dbReference>
<dbReference type="InterPro" id="IPR048259">
    <property type="entry name" value="Cytochrome_b_N_euk/bac"/>
</dbReference>
<dbReference type="InterPro" id="IPR016174">
    <property type="entry name" value="Di-haem_cyt_TM"/>
</dbReference>
<dbReference type="PANTHER" id="PTHR19271">
    <property type="entry name" value="CYTOCHROME B"/>
    <property type="match status" value="1"/>
</dbReference>
<dbReference type="PANTHER" id="PTHR19271:SF16">
    <property type="entry name" value="CYTOCHROME B"/>
    <property type="match status" value="1"/>
</dbReference>
<dbReference type="Pfam" id="PF00032">
    <property type="entry name" value="Cytochrom_B_C"/>
    <property type="match status" value="1"/>
</dbReference>
<dbReference type="Pfam" id="PF00033">
    <property type="entry name" value="Cytochrome_B"/>
    <property type="match status" value="1"/>
</dbReference>
<dbReference type="SUPFAM" id="SSF81648">
    <property type="entry name" value="a domain/subunit of cytochrome bc1 complex (Ubiquinol-cytochrome c reductase)"/>
    <property type="match status" value="1"/>
</dbReference>
<dbReference type="SUPFAM" id="SSF81342">
    <property type="entry name" value="Transmembrane di-heme cytochromes"/>
    <property type="match status" value="1"/>
</dbReference>
<dbReference type="PROSITE" id="PS51003">
    <property type="entry name" value="CYTB_CTER"/>
    <property type="match status" value="1"/>
</dbReference>
<dbReference type="PROSITE" id="PS51002">
    <property type="entry name" value="CYTB_NTER"/>
    <property type="match status" value="1"/>
</dbReference>
<gene>
    <name type="primary">MT-CYB</name>
    <name type="synonym">COB</name>
    <name type="synonym">CYTB</name>
    <name type="synonym">MTCYB</name>
</gene>
<name>CYB_PLABE</name>
<reference key="1">
    <citation type="submission" date="1997-07" db="EMBL/GenBank/DDBJ databases">
        <authorList>
            <person name="Tan T.M.C."/>
            <person name="Noviyanti R."/>
            <person name="Syafruddi N."/>
            <person name="Marzuki S."/>
            <person name="Ting R.C.Y."/>
        </authorList>
    </citation>
    <scope>NUCLEOTIDE SEQUENCE [GENOMIC DNA]</scope>
</reference>
<protein>
    <recommendedName>
        <fullName>Cytochrome b</fullName>
    </recommendedName>
    <alternativeName>
        <fullName>Complex III subunit 3</fullName>
    </alternativeName>
    <alternativeName>
        <fullName>Complex III subunit III</fullName>
    </alternativeName>
    <alternativeName>
        <fullName>Cytochrome b-c1 complex subunit 3</fullName>
    </alternativeName>
    <alternativeName>
        <fullName>Ubiquinol-cytochrome-c reductase complex cytochrome b subunit</fullName>
    </alternativeName>
</protein>